<comment type="function">
    <text evidence="2">Component of the ubiquinol-cytochrome c reductase complex (complex III or cytochrome b-c1 complex) that is part of the mitochondrial respiratory chain. The b-c1 complex mediates electron transfer from ubiquinol to cytochrome c. Contributes to the generation of a proton gradient across the mitochondrial membrane that is then used for ATP synthesis.</text>
</comment>
<comment type="cofactor">
    <cofactor evidence="2">
        <name>heme b</name>
        <dbReference type="ChEBI" id="CHEBI:60344"/>
    </cofactor>
    <text evidence="2">Binds 2 heme b groups non-covalently.</text>
</comment>
<comment type="subunit">
    <text evidence="2">The cytochrome bc1 complex contains 11 subunits: 3 respiratory subunits (MT-CYB, CYC1 and UQCRFS1), 2 core proteins (UQCRC1 and UQCRC2) and 6 low-molecular weight proteins (UQCRH/QCR6, UQCRB/QCR7, UQCRQ/QCR8, UQCR10/QCR9, UQCR11/QCR10 and a cleavage product of UQCRFS1). This cytochrome bc1 complex then forms a dimer.</text>
</comment>
<comment type="subcellular location">
    <subcellularLocation>
        <location evidence="2">Mitochondrion inner membrane</location>
        <topology evidence="2">Multi-pass membrane protein</topology>
    </subcellularLocation>
</comment>
<comment type="miscellaneous">
    <text evidence="1">Heme 1 (or BL or b562) is low-potential and absorbs at about 562 nm, and heme 2 (or BH or b566) is high-potential and absorbs at about 566 nm.</text>
</comment>
<comment type="similarity">
    <text evidence="3 4">Belongs to the cytochrome b family.</text>
</comment>
<comment type="caution">
    <text evidence="2">The full-length protein contains only eight transmembrane helices, not nine as predicted by bioinformatics tools.</text>
</comment>
<sequence>MTNIRKTHPLMKIINDAFVDLPTPSNISSWWNFGSLLGLCLIMQILTGLFLAMHYTPDTTTAFSSITHICRDVNYGWIIRYLHANGASMFFICLYAHMGRGLYYGSHAFRETWNIGVILLFTVMATAFVGYVLPWGQMSFWGATVITNLLSAIPYIGTTLVEWVWGGFSVDKATLTRFFAFHFILPFIILALAIVHLIFLHETGSNNPTGIPSNMDNIPFHPYYTIKDMLGALLLILTLLMLTLFAPDLLGDPDNYTPANPLSTPTHIKPEWYFLFAYAILRSIPNKLGGVLALLLSILILAFIPMLHTSKQRSMMFRPFSQFLFWVLVADLLTLTWIGGQPVEHPYMIVGQFASILYFLLILVLMPVASLIENKLMKW</sequence>
<protein>
    <recommendedName>
        <fullName>Cytochrome b</fullName>
    </recommendedName>
    <alternativeName>
        <fullName>Complex III subunit 3</fullName>
    </alternativeName>
    <alternativeName>
        <fullName>Complex III subunit III</fullName>
    </alternativeName>
    <alternativeName>
        <fullName>Cytochrome b-c1 complex subunit 3</fullName>
    </alternativeName>
    <alternativeName>
        <fullName>Ubiquinol-cytochrome-c reductase complex cytochrome b subunit</fullName>
    </alternativeName>
</protein>
<reference key="1">
    <citation type="journal article" date="1994" name="Nature">
        <title>Relationship of baleen whales established by cytochrome b gene sequence comparison.</title>
        <authorList>
            <person name="Arnason U."/>
            <person name="Gullberg A."/>
        </authorList>
    </citation>
    <scope>NUCLEOTIDE SEQUENCE [GENOMIC DNA]</scope>
</reference>
<dbReference type="EMBL" id="X75585">
    <property type="protein sequence ID" value="CAA53261.1"/>
    <property type="molecule type" value="Genomic_DNA"/>
</dbReference>
<dbReference type="PIR" id="S43268">
    <property type="entry name" value="S43268"/>
</dbReference>
<dbReference type="RefSeq" id="NP_944645.1">
    <property type="nucleotide sequence ID" value="NC_005270.1"/>
</dbReference>
<dbReference type="SMR" id="P41288"/>
<dbReference type="GeneID" id="2658463"/>
<dbReference type="CTD" id="4519"/>
<dbReference type="GO" id="GO:0005743">
    <property type="term" value="C:mitochondrial inner membrane"/>
    <property type="evidence" value="ECO:0007669"/>
    <property type="project" value="UniProtKB-SubCell"/>
</dbReference>
<dbReference type="GO" id="GO:0045275">
    <property type="term" value="C:respiratory chain complex III"/>
    <property type="evidence" value="ECO:0007669"/>
    <property type="project" value="InterPro"/>
</dbReference>
<dbReference type="GO" id="GO:0046872">
    <property type="term" value="F:metal ion binding"/>
    <property type="evidence" value="ECO:0007669"/>
    <property type="project" value="UniProtKB-KW"/>
</dbReference>
<dbReference type="GO" id="GO:0008121">
    <property type="term" value="F:ubiquinol-cytochrome-c reductase activity"/>
    <property type="evidence" value="ECO:0007669"/>
    <property type="project" value="InterPro"/>
</dbReference>
<dbReference type="GO" id="GO:0006122">
    <property type="term" value="P:mitochondrial electron transport, ubiquinol to cytochrome c"/>
    <property type="evidence" value="ECO:0007669"/>
    <property type="project" value="TreeGrafter"/>
</dbReference>
<dbReference type="CDD" id="cd00290">
    <property type="entry name" value="cytochrome_b_C"/>
    <property type="match status" value="1"/>
</dbReference>
<dbReference type="CDD" id="cd00284">
    <property type="entry name" value="Cytochrome_b_N"/>
    <property type="match status" value="1"/>
</dbReference>
<dbReference type="FunFam" id="1.20.810.10:FF:000002">
    <property type="entry name" value="Cytochrome b"/>
    <property type="match status" value="1"/>
</dbReference>
<dbReference type="Gene3D" id="1.20.810.10">
    <property type="entry name" value="Cytochrome Bc1 Complex, Chain C"/>
    <property type="match status" value="1"/>
</dbReference>
<dbReference type="InterPro" id="IPR005798">
    <property type="entry name" value="Cyt_b/b6_C"/>
</dbReference>
<dbReference type="InterPro" id="IPR036150">
    <property type="entry name" value="Cyt_b/b6_C_sf"/>
</dbReference>
<dbReference type="InterPro" id="IPR005797">
    <property type="entry name" value="Cyt_b/b6_N"/>
</dbReference>
<dbReference type="InterPro" id="IPR027387">
    <property type="entry name" value="Cytb/b6-like_sf"/>
</dbReference>
<dbReference type="InterPro" id="IPR030689">
    <property type="entry name" value="Cytochrome_b"/>
</dbReference>
<dbReference type="InterPro" id="IPR048260">
    <property type="entry name" value="Cytochrome_b_C_euk/bac"/>
</dbReference>
<dbReference type="InterPro" id="IPR048259">
    <property type="entry name" value="Cytochrome_b_N_euk/bac"/>
</dbReference>
<dbReference type="InterPro" id="IPR016174">
    <property type="entry name" value="Di-haem_cyt_TM"/>
</dbReference>
<dbReference type="PANTHER" id="PTHR19271">
    <property type="entry name" value="CYTOCHROME B"/>
    <property type="match status" value="1"/>
</dbReference>
<dbReference type="PANTHER" id="PTHR19271:SF16">
    <property type="entry name" value="CYTOCHROME B"/>
    <property type="match status" value="1"/>
</dbReference>
<dbReference type="Pfam" id="PF00032">
    <property type="entry name" value="Cytochrom_B_C"/>
    <property type="match status" value="1"/>
</dbReference>
<dbReference type="Pfam" id="PF00033">
    <property type="entry name" value="Cytochrome_B"/>
    <property type="match status" value="1"/>
</dbReference>
<dbReference type="PIRSF" id="PIRSF038885">
    <property type="entry name" value="COB"/>
    <property type="match status" value="1"/>
</dbReference>
<dbReference type="SUPFAM" id="SSF81648">
    <property type="entry name" value="a domain/subunit of cytochrome bc1 complex (Ubiquinol-cytochrome c reductase)"/>
    <property type="match status" value="1"/>
</dbReference>
<dbReference type="SUPFAM" id="SSF81342">
    <property type="entry name" value="Transmembrane di-heme cytochromes"/>
    <property type="match status" value="1"/>
</dbReference>
<dbReference type="PROSITE" id="PS51003">
    <property type="entry name" value="CYTB_CTER"/>
    <property type="match status" value="1"/>
</dbReference>
<dbReference type="PROSITE" id="PS51002">
    <property type="entry name" value="CYTB_NTER"/>
    <property type="match status" value="1"/>
</dbReference>
<proteinExistence type="inferred from homology"/>
<evidence type="ECO:0000250" key="1"/>
<evidence type="ECO:0000250" key="2">
    <source>
        <dbReference type="UniProtKB" id="P00157"/>
    </source>
</evidence>
<evidence type="ECO:0000255" key="3">
    <source>
        <dbReference type="PROSITE-ProRule" id="PRU00967"/>
    </source>
</evidence>
<evidence type="ECO:0000255" key="4">
    <source>
        <dbReference type="PROSITE-ProRule" id="PRU00968"/>
    </source>
</evidence>
<organism>
    <name type="scientific">Eschrichtius robustus</name>
    <name type="common">California gray whale</name>
    <name type="synonym">Eschrichtius gibbosus</name>
    <dbReference type="NCBI Taxonomy" id="9764"/>
    <lineage>
        <taxon>Eukaryota</taxon>
        <taxon>Metazoa</taxon>
        <taxon>Chordata</taxon>
        <taxon>Craniata</taxon>
        <taxon>Vertebrata</taxon>
        <taxon>Euteleostomi</taxon>
        <taxon>Mammalia</taxon>
        <taxon>Eutheria</taxon>
        <taxon>Laurasiatheria</taxon>
        <taxon>Artiodactyla</taxon>
        <taxon>Whippomorpha</taxon>
        <taxon>Cetacea</taxon>
        <taxon>Mysticeti</taxon>
        <taxon>Eschrichtiidae</taxon>
        <taxon>Eschrichtius</taxon>
    </lineage>
</organism>
<feature type="chain" id="PRO_0000060949" description="Cytochrome b">
    <location>
        <begin position="1"/>
        <end position="379"/>
    </location>
</feature>
<feature type="transmembrane region" description="Helical" evidence="2">
    <location>
        <begin position="33"/>
        <end position="53"/>
    </location>
</feature>
<feature type="transmembrane region" description="Helical" evidence="2">
    <location>
        <begin position="77"/>
        <end position="98"/>
    </location>
</feature>
<feature type="transmembrane region" description="Helical" evidence="2">
    <location>
        <begin position="113"/>
        <end position="133"/>
    </location>
</feature>
<feature type="transmembrane region" description="Helical" evidence="2">
    <location>
        <begin position="178"/>
        <end position="198"/>
    </location>
</feature>
<feature type="transmembrane region" description="Helical" evidence="2">
    <location>
        <begin position="226"/>
        <end position="246"/>
    </location>
</feature>
<feature type="transmembrane region" description="Helical" evidence="2">
    <location>
        <begin position="288"/>
        <end position="308"/>
    </location>
</feature>
<feature type="transmembrane region" description="Helical" evidence="2">
    <location>
        <begin position="320"/>
        <end position="340"/>
    </location>
</feature>
<feature type="transmembrane region" description="Helical" evidence="2">
    <location>
        <begin position="347"/>
        <end position="367"/>
    </location>
</feature>
<feature type="binding site" description="axial binding residue" evidence="2">
    <location>
        <position position="83"/>
    </location>
    <ligand>
        <name>heme b</name>
        <dbReference type="ChEBI" id="CHEBI:60344"/>
        <label>b562</label>
    </ligand>
    <ligandPart>
        <name>Fe</name>
        <dbReference type="ChEBI" id="CHEBI:18248"/>
    </ligandPart>
</feature>
<feature type="binding site" description="axial binding residue" evidence="2">
    <location>
        <position position="97"/>
    </location>
    <ligand>
        <name>heme b</name>
        <dbReference type="ChEBI" id="CHEBI:60344"/>
        <label>b566</label>
    </ligand>
    <ligandPart>
        <name>Fe</name>
        <dbReference type="ChEBI" id="CHEBI:18248"/>
    </ligandPart>
</feature>
<feature type="binding site" description="axial binding residue" evidence="2">
    <location>
        <position position="182"/>
    </location>
    <ligand>
        <name>heme b</name>
        <dbReference type="ChEBI" id="CHEBI:60344"/>
        <label>b562</label>
    </ligand>
    <ligandPart>
        <name>Fe</name>
        <dbReference type="ChEBI" id="CHEBI:18248"/>
    </ligandPart>
</feature>
<feature type="binding site" description="axial binding residue" evidence="2">
    <location>
        <position position="196"/>
    </location>
    <ligand>
        <name>heme b</name>
        <dbReference type="ChEBI" id="CHEBI:60344"/>
        <label>b566</label>
    </ligand>
    <ligandPart>
        <name>Fe</name>
        <dbReference type="ChEBI" id="CHEBI:18248"/>
    </ligandPart>
</feature>
<feature type="binding site" evidence="2">
    <location>
        <position position="201"/>
    </location>
    <ligand>
        <name>a ubiquinone</name>
        <dbReference type="ChEBI" id="CHEBI:16389"/>
    </ligand>
</feature>
<accession>P41288</accession>
<geneLocation type="mitochondrion"/>
<keyword id="KW-0249">Electron transport</keyword>
<keyword id="KW-0349">Heme</keyword>
<keyword id="KW-0408">Iron</keyword>
<keyword id="KW-0472">Membrane</keyword>
<keyword id="KW-0479">Metal-binding</keyword>
<keyword id="KW-0496">Mitochondrion</keyword>
<keyword id="KW-0999">Mitochondrion inner membrane</keyword>
<keyword id="KW-0679">Respiratory chain</keyword>
<keyword id="KW-0812">Transmembrane</keyword>
<keyword id="KW-1133">Transmembrane helix</keyword>
<keyword id="KW-0813">Transport</keyword>
<keyword id="KW-0830">Ubiquinone</keyword>
<gene>
    <name type="primary">MT-CYB</name>
    <name type="synonym">COB</name>
    <name type="synonym">CYTB</name>
    <name type="synonym">MTCYB</name>
</gene>
<name>CYB_ESCRO</name>